<feature type="chain" id="PRO_0000415491" description="Hypoxanthine/guanine phosphoribosyltransferase">
    <location>
        <begin position="1"/>
        <end position="191"/>
    </location>
</feature>
<accession>Q0W496</accession>
<sequence>MLKILKESLKTAPIVKRGTYNYFIHPISDGVPVVKPELLRDVIACIVKNADLDVDKIVTIEAMGLPIGASLSQITDIPFIIIRKRKYELPGEIAVHQATGYSKGELYLNGICKGDRVLIVDDVISTGGTLAAVIKALEMAGAEIKDIVVVIQRGNGKKIIEDMGYNVQTLVTIDVDENGVQVLGCIDDECK</sequence>
<protein>
    <recommendedName>
        <fullName evidence="1">Hypoxanthine/guanine phosphoribosyltransferase</fullName>
        <shortName evidence="1">HGPRTase</shortName>
        <ecNumber evidence="1">2.4.2.8</ecNumber>
    </recommendedName>
</protein>
<reference key="1">
    <citation type="journal article" date="2006" name="Science">
        <title>Genome of rice cluster I archaea -- the key methane producers in the rice rhizosphere.</title>
        <authorList>
            <person name="Erkel C."/>
            <person name="Kube M."/>
            <person name="Reinhardt R."/>
            <person name="Liesack W."/>
        </authorList>
    </citation>
    <scope>NUCLEOTIDE SEQUENCE [LARGE SCALE GENOMIC DNA]</scope>
    <source>
        <strain>DSM 22066 / NBRC 105507 / MRE50</strain>
    </source>
</reference>
<evidence type="ECO:0000255" key="1">
    <source>
        <dbReference type="HAMAP-Rule" id="MF_01467"/>
    </source>
</evidence>
<proteinExistence type="inferred from homology"/>
<name>HPRT_METAR</name>
<keyword id="KW-0963">Cytoplasm</keyword>
<keyword id="KW-0328">Glycosyltransferase</keyword>
<keyword id="KW-0660">Purine salvage</keyword>
<keyword id="KW-1185">Reference proteome</keyword>
<keyword id="KW-0808">Transferase</keyword>
<comment type="function">
    <text evidence="1">Catalyzes a salvage reaction resulting in the formation of IMP that is energically less costly than de novo synthesis.</text>
</comment>
<comment type="catalytic activity">
    <reaction evidence="1">
        <text>IMP + diphosphate = hypoxanthine + 5-phospho-alpha-D-ribose 1-diphosphate</text>
        <dbReference type="Rhea" id="RHEA:17973"/>
        <dbReference type="ChEBI" id="CHEBI:17368"/>
        <dbReference type="ChEBI" id="CHEBI:33019"/>
        <dbReference type="ChEBI" id="CHEBI:58017"/>
        <dbReference type="ChEBI" id="CHEBI:58053"/>
        <dbReference type="EC" id="2.4.2.8"/>
    </reaction>
</comment>
<comment type="catalytic activity">
    <reaction evidence="1">
        <text>GMP + diphosphate = guanine + 5-phospho-alpha-D-ribose 1-diphosphate</text>
        <dbReference type="Rhea" id="RHEA:25424"/>
        <dbReference type="ChEBI" id="CHEBI:16235"/>
        <dbReference type="ChEBI" id="CHEBI:33019"/>
        <dbReference type="ChEBI" id="CHEBI:58017"/>
        <dbReference type="ChEBI" id="CHEBI:58115"/>
        <dbReference type="EC" id="2.4.2.8"/>
    </reaction>
</comment>
<comment type="pathway">
    <text evidence="1">Purine metabolism; IMP biosynthesis via salvage pathway; IMP from hypoxanthine: step 1/1.</text>
</comment>
<comment type="subunit">
    <text evidence="1">Homodimer.</text>
</comment>
<comment type="subcellular location">
    <subcellularLocation>
        <location evidence="1">Cytoplasm</location>
    </subcellularLocation>
</comment>
<comment type="similarity">
    <text evidence="1">Belongs to the purine/pyrimidine phosphoribosyltransferase family. Archaeal HPRT subfamily.</text>
</comment>
<organism>
    <name type="scientific">Methanocella arvoryzae (strain DSM 22066 / NBRC 105507 / MRE50)</name>
    <dbReference type="NCBI Taxonomy" id="351160"/>
    <lineage>
        <taxon>Archaea</taxon>
        <taxon>Methanobacteriati</taxon>
        <taxon>Methanobacteriota</taxon>
        <taxon>Stenosarchaea group</taxon>
        <taxon>Methanomicrobia</taxon>
        <taxon>Methanocellales</taxon>
        <taxon>Methanocellaceae</taxon>
        <taxon>Methanocella</taxon>
    </lineage>
</organism>
<dbReference type="EC" id="2.4.2.8" evidence="1"/>
<dbReference type="EMBL" id="AM114193">
    <property type="protein sequence ID" value="CAJ36797.1"/>
    <property type="molecule type" value="Genomic_DNA"/>
</dbReference>
<dbReference type="RefSeq" id="WP_012035760.1">
    <property type="nucleotide sequence ID" value="NC_009464.1"/>
</dbReference>
<dbReference type="SMR" id="Q0W496"/>
<dbReference type="STRING" id="351160.RCIX1545"/>
<dbReference type="GeneID" id="5142946"/>
<dbReference type="KEGG" id="rci:RCIX1545"/>
<dbReference type="PATRIC" id="fig|351160.9.peg.1477"/>
<dbReference type="eggNOG" id="arCOG00030">
    <property type="taxonomic scope" value="Archaea"/>
</dbReference>
<dbReference type="OrthoDB" id="8323at2157"/>
<dbReference type="UniPathway" id="UPA00591">
    <property type="reaction ID" value="UER00648"/>
</dbReference>
<dbReference type="Proteomes" id="UP000000663">
    <property type="component" value="Chromosome"/>
</dbReference>
<dbReference type="GO" id="GO:0005737">
    <property type="term" value="C:cytoplasm"/>
    <property type="evidence" value="ECO:0007669"/>
    <property type="project" value="UniProtKB-SubCell"/>
</dbReference>
<dbReference type="GO" id="GO:0052657">
    <property type="term" value="F:guanine phosphoribosyltransferase activity"/>
    <property type="evidence" value="ECO:0007669"/>
    <property type="project" value="RHEA"/>
</dbReference>
<dbReference type="GO" id="GO:0004422">
    <property type="term" value="F:hypoxanthine phosphoribosyltransferase activity"/>
    <property type="evidence" value="ECO:0007669"/>
    <property type="project" value="UniProtKB-UniRule"/>
</dbReference>
<dbReference type="GO" id="GO:0032264">
    <property type="term" value="P:IMP salvage"/>
    <property type="evidence" value="ECO:0007669"/>
    <property type="project" value="UniProtKB-UniRule"/>
</dbReference>
<dbReference type="GO" id="GO:0006166">
    <property type="term" value="P:purine ribonucleoside salvage"/>
    <property type="evidence" value="ECO:0007669"/>
    <property type="project" value="UniProtKB-KW"/>
</dbReference>
<dbReference type="CDD" id="cd06223">
    <property type="entry name" value="PRTases_typeI"/>
    <property type="match status" value="1"/>
</dbReference>
<dbReference type="Gene3D" id="3.40.50.2020">
    <property type="match status" value="1"/>
</dbReference>
<dbReference type="HAMAP" id="MF_01467">
    <property type="entry name" value="Hypx_phosphoribosyltr"/>
    <property type="match status" value="1"/>
</dbReference>
<dbReference type="InterPro" id="IPR026597">
    <property type="entry name" value="HGPRTase-like"/>
</dbReference>
<dbReference type="InterPro" id="IPR000836">
    <property type="entry name" value="PRibTrfase_dom"/>
</dbReference>
<dbReference type="InterPro" id="IPR029057">
    <property type="entry name" value="PRTase-like"/>
</dbReference>
<dbReference type="InterPro" id="IPR050118">
    <property type="entry name" value="Pur/Pyrimidine_PRTase"/>
</dbReference>
<dbReference type="NCBIfam" id="NF040646">
    <property type="entry name" value="HPT_Archaea"/>
    <property type="match status" value="1"/>
</dbReference>
<dbReference type="NCBIfam" id="NF002635">
    <property type="entry name" value="PRK02304.1-4"/>
    <property type="match status" value="1"/>
</dbReference>
<dbReference type="PANTHER" id="PTHR43864">
    <property type="entry name" value="HYPOXANTHINE/GUANINE PHOSPHORIBOSYLTRANSFERASE"/>
    <property type="match status" value="1"/>
</dbReference>
<dbReference type="PANTHER" id="PTHR43864:SF1">
    <property type="entry name" value="XANTHINE PHOSPHORIBOSYLTRANSFERASE"/>
    <property type="match status" value="1"/>
</dbReference>
<dbReference type="Pfam" id="PF00156">
    <property type="entry name" value="Pribosyltran"/>
    <property type="match status" value="1"/>
</dbReference>
<dbReference type="SUPFAM" id="SSF53271">
    <property type="entry name" value="PRTase-like"/>
    <property type="match status" value="1"/>
</dbReference>
<dbReference type="PROSITE" id="PS00103">
    <property type="entry name" value="PUR_PYR_PR_TRANSFER"/>
    <property type="match status" value="1"/>
</dbReference>
<gene>
    <name evidence="1" type="primary">hpt</name>
    <name type="ordered locus">UNCMA_14320</name>
    <name type="ORF">RCIX1545</name>
</gene>